<keyword id="KW-0028">Amino-acid biosynthesis</keyword>
<keyword id="KW-0100">Branched-chain amino acid biosynthesis</keyword>
<keyword id="KW-0432">Leucine biosynthesis</keyword>
<keyword id="KW-0456">Lyase</keyword>
<name>LEUD_BURA4</name>
<sequence length="216" mass="24644">MEKFTVHTGVVAPLDRENVDTDAIIPKQFLKSIKRTGFGPNAFDEWRYLDHGEPGQDNSKRPLNPDFVLNQPRYQGASVLLARKNFGCGSSREHAPWALQQYGFRAIIAPSFADIFFNNCYKNGLLPIVLTEQQVDHLFNDTYAFNGYQLTVDLDAQVVRTGDGREYPFEIAAFRKYCLLNGFDDIGLTLRHADKIRQFEAERLAKQPWLNNKLVG</sequence>
<evidence type="ECO:0000255" key="1">
    <source>
        <dbReference type="HAMAP-Rule" id="MF_01031"/>
    </source>
</evidence>
<reference key="1">
    <citation type="submission" date="2008-04" db="EMBL/GenBank/DDBJ databases">
        <title>Complete sequence of chromosome 2 of Burkholderia ambifaria MC40-6.</title>
        <authorList>
            <person name="Copeland A."/>
            <person name="Lucas S."/>
            <person name="Lapidus A."/>
            <person name="Glavina del Rio T."/>
            <person name="Dalin E."/>
            <person name="Tice H."/>
            <person name="Pitluck S."/>
            <person name="Chain P."/>
            <person name="Malfatti S."/>
            <person name="Shin M."/>
            <person name="Vergez L."/>
            <person name="Lang D."/>
            <person name="Schmutz J."/>
            <person name="Larimer F."/>
            <person name="Land M."/>
            <person name="Hauser L."/>
            <person name="Kyrpides N."/>
            <person name="Lykidis A."/>
            <person name="Ramette A."/>
            <person name="Konstantinidis K."/>
            <person name="Tiedje J."/>
            <person name="Richardson P."/>
        </authorList>
    </citation>
    <scope>NUCLEOTIDE SEQUENCE [LARGE SCALE GENOMIC DNA]</scope>
    <source>
        <strain>MC40-6</strain>
    </source>
</reference>
<organism>
    <name type="scientific">Burkholderia ambifaria (strain MC40-6)</name>
    <dbReference type="NCBI Taxonomy" id="398577"/>
    <lineage>
        <taxon>Bacteria</taxon>
        <taxon>Pseudomonadati</taxon>
        <taxon>Pseudomonadota</taxon>
        <taxon>Betaproteobacteria</taxon>
        <taxon>Burkholderiales</taxon>
        <taxon>Burkholderiaceae</taxon>
        <taxon>Burkholderia</taxon>
        <taxon>Burkholderia cepacia complex</taxon>
    </lineage>
</organism>
<feature type="chain" id="PRO_1000135794" description="3-isopropylmalate dehydratase small subunit">
    <location>
        <begin position="1"/>
        <end position="216"/>
    </location>
</feature>
<comment type="function">
    <text evidence="1">Catalyzes the isomerization between 2-isopropylmalate and 3-isopropylmalate, via the formation of 2-isopropylmaleate.</text>
</comment>
<comment type="catalytic activity">
    <reaction evidence="1">
        <text>(2R,3S)-3-isopropylmalate = (2S)-2-isopropylmalate</text>
        <dbReference type="Rhea" id="RHEA:32287"/>
        <dbReference type="ChEBI" id="CHEBI:1178"/>
        <dbReference type="ChEBI" id="CHEBI:35121"/>
        <dbReference type="EC" id="4.2.1.33"/>
    </reaction>
</comment>
<comment type="pathway">
    <text evidence="1">Amino-acid biosynthesis; L-leucine biosynthesis; L-leucine from 3-methyl-2-oxobutanoate: step 2/4.</text>
</comment>
<comment type="subunit">
    <text evidence="1">Heterodimer of LeuC and LeuD.</text>
</comment>
<comment type="similarity">
    <text evidence="1">Belongs to the LeuD family. LeuD type 1 subfamily.</text>
</comment>
<accession>B1Z1N2</accession>
<dbReference type="EC" id="4.2.1.33" evidence="1"/>
<dbReference type="EMBL" id="CP001026">
    <property type="protein sequence ID" value="ACB66313.1"/>
    <property type="molecule type" value="Genomic_DNA"/>
</dbReference>
<dbReference type="RefSeq" id="WP_006754088.1">
    <property type="nucleotide sequence ID" value="NC_010552.1"/>
</dbReference>
<dbReference type="SMR" id="B1Z1N2"/>
<dbReference type="GeneID" id="93086350"/>
<dbReference type="KEGG" id="bac:BamMC406_3846"/>
<dbReference type="HOGENOM" id="CLU_081378_0_3_4"/>
<dbReference type="OrthoDB" id="9777465at2"/>
<dbReference type="UniPathway" id="UPA00048">
    <property type="reaction ID" value="UER00071"/>
</dbReference>
<dbReference type="Proteomes" id="UP000001680">
    <property type="component" value="Chromosome 2"/>
</dbReference>
<dbReference type="GO" id="GO:0009316">
    <property type="term" value="C:3-isopropylmalate dehydratase complex"/>
    <property type="evidence" value="ECO:0007669"/>
    <property type="project" value="InterPro"/>
</dbReference>
<dbReference type="GO" id="GO:0003861">
    <property type="term" value="F:3-isopropylmalate dehydratase activity"/>
    <property type="evidence" value="ECO:0007669"/>
    <property type="project" value="UniProtKB-UniRule"/>
</dbReference>
<dbReference type="GO" id="GO:0009098">
    <property type="term" value="P:L-leucine biosynthetic process"/>
    <property type="evidence" value="ECO:0007669"/>
    <property type="project" value="UniProtKB-UniRule"/>
</dbReference>
<dbReference type="CDD" id="cd01577">
    <property type="entry name" value="IPMI_Swivel"/>
    <property type="match status" value="1"/>
</dbReference>
<dbReference type="FunFam" id="3.20.19.10:FF:000003">
    <property type="entry name" value="3-isopropylmalate dehydratase small subunit"/>
    <property type="match status" value="1"/>
</dbReference>
<dbReference type="Gene3D" id="3.20.19.10">
    <property type="entry name" value="Aconitase, domain 4"/>
    <property type="match status" value="1"/>
</dbReference>
<dbReference type="HAMAP" id="MF_01031">
    <property type="entry name" value="LeuD_type1"/>
    <property type="match status" value="1"/>
</dbReference>
<dbReference type="InterPro" id="IPR004431">
    <property type="entry name" value="3-IsopropMal_deHydase_ssu"/>
</dbReference>
<dbReference type="InterPro" id="IPR015928">
    <property type="entry name" value="Aconitase/3IPM_dehydase_swvl"/>
</dbReference>
<dbReference type="InterPro" id="IPR000573">
    <property type="entry name" value="AconitaseA/IPMdHydase_ssu_swvl"/>
</dbReference>
<dbReference type="InterPro" id="IPR033940">
    <property type="entry name" value="IPMI_Swivel"/>
</dbReference>
<dbReference type="InterPro" id="IPR050075">
    <property type="entry name" value="LeuD"/>
</dbReference>
<dbReference type="NCBIfam" id="TIGR00171">
    <property type="entry name" value="leuD"/>
    <property type="match status" value="1"/>
</dbReference>
<dbReference type="NCBIfam" id="NF002458">
    <property type="entry name" value="PRK01641.1"/>
    <property type="match status" value="1"/>
</dbReference>
<dbReference type="PANTHER" id="PTHR43345:SF5">
    <property type="entry name" value="3-ISOPROPYLMALATE DEHYDRATASE SMALL SUBUNIT"/>
    <property type="match status" value="1"/>
</dbReference>
<dbReference type="PANTHER" id="PTHR43345">
    <property type="entry name" value="3-ISOPROPYLMALATE DEHYDRATASE SMALL SUBUNIT 2-RELATED-RELATED"/>
    <property type="match status" value="1"/>
</dbReference>
<dbReference type="Pfam" id="PF00694">
    <property type="entry name" value="Aconitase_C"/>
    <property type="match status" value="1"/>
</dbReference>
<dbReference type="SUPFAM" id="SSF52016">
    <property type="entry name" value="LeuD/IlvD-like"/>
    <property type="match status" value="1"/>
</dbReference>
<proteinExistence type="inferred from homology"/>
<gene>
    <name evidence="1" type="primary">leuD</name>
    <name type="ordered locus">BamMC406_3846</name>
</gene>
<protein>
    <recommendedName>
        <fullName evidence="1">3-isopropylmalate dehydratase small subunit</fullName>
        <ecNumber evidence="1">4.2.1.33</ecNumber>
    </recommendedName>
    <alternativeName>
        <fullName evidence="1">Alpha-IPM isomerase</fullName>
        <shortName evidence="1">IPMI</shortName>
    </alternativeName>
    <alternativeName>
        <fullName evidence="1">Isopropylmalate isomerase</fullName>
    </alternativeName>
</protein>